<comment type="function">
    <text>Responsible for the anti Gram-negative activity of immune hemolymph of Z.atratus.</text>
</comment>
<comment type="subcellular location">
    <subcellularLocation>
        <location>Secreted</location>
    </subcellularLocation>
</comment>
<comment type="similarity">
    <text evidence="2">Belongs to the coleoptericin family.</text>
</comment>
<dbReference type="PIR" id="A41711">
    <property type="entry name" value="A41711"/>
</dbReference>
<dbReference type="GO" id="GO:0005576">
    <property type="term" value="C:extracellular region"/>
    <property type="evidence" value="ECO:0007669"/>
    <property type="project" value="UniProtKB-SubCell"/>
</dbReference>
<dbReference type="GO" id="GO:0042742">
    <property type="term" value="P:defense response to bacterium"/>
    <property type="evidence" value="ECO:0007669"/>
    <property type="project" value="UniProtKB-KW"/>
</dbReference>
<dbReference type="GO" id="GO:0045087">
    <property type="term" value="P:innate immune response"/>
    <property type="evidence" value="ECO:0007669"/>
    <property type="project" value="UniProtKB-KW"/>
</dbReference>
<dbReference type="InterPro" id="IPR009382">
    <property type="entry name" value="Coleoptericin"/>
</dbReference>
<dbReference type="Pfam" id="PF06286">
    <property type="entry name" value="Coleoptericin"/>
    <property type="match status" value="1"/>
</dbReference>
<accession>P80032</accession>
<feature type="chain" id="PRO_0000127113" description="Coleoptericin">
    <location>
        <begin position="1"/>
        <end position="74"/>
    </location>
</feature>
<feature type="region of interest" description="Disordered" evidence="1">
    <location>
        <begin position="1"/>
        <end position="74"/>
    </location>
</feature>
<protein>
    <recommendedName>
        <fullName>Coleoptericin</fullName>
    </recommendedName>
</protein>
<name>COLE_ZOPAT</name>
<organism>
    <name type="scientific">Zophobas atratus</name>
    <name type="common">Giant mealworm beetle</name>
    <name type="synonym">Zophobas rugipes</name>
    <dbReference type="NCBI Taxonomy" id="7074"/>
    <lineage>
        <taxon>Eukaryota</taxon>
        <taxon>Metazoa</taxon>
        <taxon>Ecdysozoa</taxon>
        <taxon>Arthropoda</taxon>
        <taxon>Hexapoda</taxon>
        <taxon>Insecta</taxon>
        <taxon>Pterygota</taxon>
        <taxon>Neoptera</taxon>
        <taxon>Endopterygota</taxon>
        <taxon>Coleoptera</taxon>
        <taxon>Polyphaga</taxon>
        <taxon>Cucujiformia</taxon>
        <taxon>Tenebrionidae</taxon>
        <taxon>Zophobas</taxon>
    </lineage>
</organism>
<reference key="1">
    <citation type="journal article" date="1991" name="J. Biol. Chem.">
        <title>Insect immunity. Isolation from a coleopteran insect of a novel inducible antibacterial peptide and of new members of the insect defensin family.</title>
        <authorList>
            <person name="Bulet P."/>
            <person name="Cociancich S."/>
            <person name="Dimarcq J.-L."/>
            <person name="Lambert J."/>
            <person name="Reichhart J.-M."/>
            <person name="Hoffmann D."/>
            <person name="Hetru C."/>
            <person name="Hoffmann J.A."/>
        </authorList>
    </citation>
    <scope>PROTEIN SEQUENCE</scope>
    <source>
        <tissue>Hemolymph</tissue>
    </source>
</reference>
<evidence type="ECO:0000256" key="1">
    <source>
        <dbReference type="SAM" id="MobiDB-lite"/>
    </source>
</evidence>
<evidence type="ECO:0000305" key="2"/>
<keyword id="KW-0044">Antibiotic</keyword>
<keyword id="KW-0929">Antimicrobial</keyword>
<keyword id="KW-0903">Direct protein sequencing</keyword>
<keyword id="KW-0391">Immunity</keyword>
<keyword id="KW-0399">Innate immunity</keyword>
<keyword id="KW-0964">Secreted</keyword>
<sequence length="74" mass="8110">SLQGGAPNFPQPSQQNGGWQVSPDLGRDDKGNTRGQIEIQNKGKDHDFNAGWGKVIRGPNKAKPTWHVGGTYRR</sequence>
<proteinExistence type="evidence at protein level"/>